<comment type="similarity">
    <text evidence="1">Belongs to the universal ribosomal protein uS2 family.</text>
</comment>
<evidence type="ECO:0000255" key="1">
    <source>
        <dbReference type="HAMAP-Rule" id="MF_00291"/>
    </source>
</evidence>
<evidence type="ECO:0000305" key="2"/>
<reference key="1">
    <citation type="submission" date="2003-03" db="EMBL/GenBank/DDBJ databases">
        <title>The complete genome sequence of Neisseria gonorrhoeae.</title>
        <authorList>
            <person name="Lewis L.A."/>
            <person name="Gillaspy A.F."/>
            <person name="McLaughlin R.E."/>
            <person name="Gipson M."/>
            <person name="Ducey T.F."/>
            <person name="Ownbey T."/>
            <person name="Hartman K."/>
            <person name="Nydick C."/>
            <person name="Carson M.B."/>
            <person name="Vaughn J."/>
            <person name="Thomson C."/>
            <person name="Song L."/>
            <person name="Lin S."/>
            <person name="Yuan X."/>
            <person name="Najar F."/>
            <person name="Zhan M."/>
            <person name="Ren Q."/>
            <person name="Zhu H."/>
            <person name="Qi S."/>
            <person name="Kenton S.M."/>
            <person name="Lai H."/>
            <person name="White J.D."/>
            <person name="Clifton S."/>
            <person name="Roe B.A."/>
            <person name="Dyer D.W."/>
        </authorList>
    </citation>
    <scope>NUCLEOTIDE SEQUENCE [LARGE SCALE GENOMIC DNA]</scope>
    <source>
        <strain>ATCC 700825 / FA 1090</strain>
    </source>
</reference>
<feature type="chain" id="PRO_1000004004" description="Small ribosomal subunit protein uS2">
    <location>
        <begin position="1"/>
        <end position="242"/>
    </location>
</feature>
<gene>
    <name evidence="1" type="primary">rpsB</name>
    <name type="ordered locus">NGO_1975</name>
</gene>
<organism>
    <name type="scientific">Neisseria gonorrhoeae (strain ATCC 700825 / FA 1090)</name>
    <dbReference type="NCBI Taxonomy" id="242231"/>
    <lineage>
        <taxon>Bacteria</taxon>
        <taxon>Pseudomonadati</taxon>
        <taxon>Pseudomonadota</taxon>
        <taxon>Betaproteobacteria</taxon>
        <taxon>Neisseriales</taxon>
        <taxon>Neisseriaceae</taxon>
        <taxon>Neisseria</taxon>
    </lineage>
</organism>
<protein>
    <recommendedName>
        <fullName evidence="1">Small ribosomal subunit protein uS2</fullName>
    </recommendedName>
    <alternativeName>
        <fullName evidence="2">30S ribosomal protein S2</fullName>
    </alternativeName>
</protein>
<dbReference type="EMBL" id="AE004969">
    <property type="protein sequence ID" value="AAW90584.1"/>
    <property type="molecule type" value="Genomic_DNA"/>
</dbReference>
<dbReference type="RefSeq" id="WP_003686861.1">
    <property type="nucleotide sequence ID" value="NC_002946.2"/>
</dbReference>
<dbReference type="RefSeq" id="YP_208996.1">
    <property type="nucleotide sequence ID" value="NC_002946.2"/>
</dbReference>
<dbReference type="SMR" id="Q5F5F3"/>
<dbReference type="STRING" id="242231.NGO_1975"/>
<dbReference type="GeneID" id="66754138"/>
<dbReference type="KEGG" id="ngo:NGO_1975"/>
<dbReference type="PATRIC" id="fig|242231.10.peg.2384"/>
<dbReference type="HOGENOM" id="CLU_040318_2_1_4"/>
<dbReference type="Proteomes" id="UP000000535">
    <property type="component" value="Chromosome"/>
</dbReference>
<dbReference type="GO" id="GO:0022627">
    <property type="term" value="C:cytosolic small ribosomal subunit"/>
    <property type="evidence" value="ECO:0007669"/>
    <property type="project" value="TreeGrafter"/>
</dbReference>
<dbReference type="GO" id="GO:0003735">
    <property type="term" value="F:structural constituent of ribosome"/>
    <property type="evidence" value="ECO:0007669"/>
    <property type="project" value="InterPro"/>
</dbReference>
<dbReference type="GO" id="GO:0006412">
    <property type="term" value="P:translation"/>
    <property type="evidence" value="ECO:0007669"/>
    <property type="project" value="UniProtKB-UniRule"/>
</dbReference>
<dbReference type="CDD" id="cd01425">
    <property type="entry name" value="RPS2"/>
    <property type="match status" value="1"/>
</dbReference>
<dbReference type="FunFam" id="1.10.287.610:FF:000004">
    <property type="entry name" value="30S ribosomal protein S2"/>
    <property type="match status" value="1"/>
</dbReference>
<dbReference type="Gene3D" id="3.40.50.10490">
    <property type="entry name" value="Glucose-6-phosphate isomerase like protein, domain 1"/>
    <property type="match status" value="1"/>
</dbReference>
<dbReference type="Gene3D" id="1.10.287.610">
    <property type="entry name" value="Helix hairpin bin"/>
    <property type="match status" value="1"/>
</dbReference>
<dbReference type="HAMAP" id="MF_00291_B">
    <property type="entry name" value="Ribosomal_uS2_B"/>
    <property type="match status" value="1"/>
</dbReference>
<dbReference type="InterPro" id="IPR001865">
    <property type="entry name" value="Ribosomal_uS2"/>
</dbReference>
<dbReference type="InterPro" id="IPR005706">
    <property type="entry name" value="Ribosomal_uS2_bac/mit/plastid"/>
</dbReference>
<dbReference type="InterPro" id="IPR018130">
    <property type="entry name" value="Ribosomal_uS2_CS"/>
</dbReference>
<dbReference type="InterPro" id="IPR023591">
    <property type="entry name" value="Ribosomal_uS2_flav_dom_sf"/>
</dbReference>
<dbReference type="NCBIfam" id="TIGR01011">
    <property type="entry name" value="rpsB_bact"/>
    <property type="match status" value="1"/>
</dbReference>
<dbReference type="PANTHER" id="PTHR12534">
    <property type="entry name" value="30S RIBOSOMAL PROTEIN S2 PROKARYOTIC AND ORGANELLAR"/>
    <property type="match status" value="1"/>
</dbReference>
<dbReference type="PANTHER" id="PTHR12534:SF0">
    <property type="entry name" value="SMALL RIBOSOMAL SUBUNIT PROTEIN US2M"/>
    <property type="match status" value="1"/>
</dbReference>
<dbReference type="Pfam" id="PF00318">
    <property type="entry name" value="Ribosomal_S2"/>
    <property type="match status" value="1"/>
</dbReference>
<dbReference type="PRINTS" id="PR00395">
    <property type="entry name" value="RIBOSOMALS2"/>
</dbReference>
<dbReference type="SUPFAM" id="SSF52313">
    <property type="entry name" value="Ribosomal protein S2"/>
    <property type="match status" value="1"/>
</dbReference>
<dbReference type="PROSITE" id="PS00962">
    <property type="entry name" value="RIBOSOMAL_S2_1"/>
    <property type="match status" value="1"/>
</dbReference>
<accession>Q5F5F3</accession>
<keyword id="KW-1185">Reference proteome</keyword>
<keyword id="KW-0687">Ribonucleoprotein</keyword>
<keyword id="KW-0689">Ribosomal protein</keyword>
<sequence length="242" mass="26917">MSQITMRQMIEAGVHFGHQTRFWNPKMAQYIFGARNKIHIVNLEKTLPMFQEAQEAVRRLVANKGTVLFVGTKRQARDIIREEATRAGMPFVDHRWLGGMLTNYKTVKQSIKRLEEKTAALENAAESGFSKKEILEMQRDVEKLERSLGGIKNMKGLPDAIFVIDTGYQKGTLVEAEKLGIPVIAVVDTNNSPDGVKYVIPGNDDSAKAIRLYCRGIADAVLEGKNQALQETVAAAQETAAE</sequence>
<name>RS2_NEIG1</name>
<proteinExistence type="inferred from homology"/>